<gene>
    <name type="primary">TEL1</name>
    <name type="ordered locus">CAALFM_C603010WA</name>
    <name type="ORF">CaO19.13026</name>
    <name type="ORF">CaO19.5580</name>
</gene>
<proteinExistence type="inferred from homology"/>
<name>ATM_CANAL</name>
<comment type="function">
    <text evidence="1">Serine/threonine protein kinase which activates checkpoint signaling upon genotoxic stresses such as ionizing radiation (IR), ultraviolet light (UV), or DNA replication stalling, thereby acting as a DNA damage sensor. Recognizes the substrate consensus sequence [ST]-Q. Phosphorylates histone H2A to form H2AS128ph (gamma-H2A) at sites of DNA damage, involved in the regulation of DNA damage response mechanism. Required for the control of telomere length and genome stability (By similarity).</text>
</comment>
<comment type="catalytic activity">
    <reaction>
        <text>L-seryl-[protein] + ATP = O-phospho-L-seryl-[protein] + ADP + H(+)</text>
        <dbReference type="Rhea" id="RHEA:17989"/>
        <dbReference type="Rhea" id="RHEA-COMP:9863"/>
        <dbReference type="Rhea" id="RHEA-COMP:11604"/>
        <dbReference type="ChEBI" id="CHEBI:15378"/>
        <dbReference type="ChEBI" id="CHEBI:29999"/>
        <dbReference type="ChEBI" id="CHEBI:30616"/>
        <dbReference type="ChEBI" id="CHEBI:83421"/>
        <dbReference type="ChEBI" id="CHEBI:456216"/>
        <dbReference type="EC" id="2.7.11.1"/>
    </reaction>
</comment>
<comment type="catalytic activity">
    <reaction>
        <text>L-threonyl-[protein] + ATP = O-phospho-L-threonyl-[protein] + ADP + H(+)</text>
        <dbReference type="Rhea" id="RHEA:46608"/>
        <dbReference type="Rhea" id="RHEA-COMP:11060"/>
        <dbReference type="Rhea" id="RHEA-COMP:11605"/>
        <dbReference type="ChEBI" id="CHEBI:15378"/>
        <dbReference type="ChEBI" id="CHEBI:30013"/>
        <dbReference type="ChEBI" id="CHEBI:30616"/>
        <dbReference type="ChEBI" id="CHEBI:61977"/>
        <dbReference type="ChEBI" id="CHEBI:456216"/>
        <dbReference type="EC" id="2.7.11.1"/>
    </reaction>
</comment>
<comment type="subunit">
    <text evidence="1">Associates with DNA double-strand breaks.</text>
</comment>
<comment type="subcellular location">
    <subcellularLocation>
        <location evidence="1">Nucleus</location>
    </subcellularLocation>
    <subcellularLocation>
        <location evidence="1">Chromosome</location>
        <location evidence="1">Telomere</location>
    </subcellularLocation>
    <text evidence="1">Localizes to nuclear DNA repair foci with other DNA repair proteins in response to DNA double strand breaks.</text>
</comment>
<comment type="similarity">
    <text evidence="5">Belongs to the PI3/PI4-kinase family. ATM subfamily.</text>
</comment>
<evidence type="ECO:0000250" key="1"/>
<evidence type="ECO:0000255" key="2">
    <source>
        <dbReference type="PROSITE-ProRule" id="PRU00269"/>
    </source>
</evidence>
<evidence type="ECO:0000255" key="3">
    <source>
        <dbReference type="PROSITE-ProRule" id="PRU00534"/>
    </source>
</evidence>
<evidence type="ECO:0000255" key="4">
    <source>
        <dbReference type="PROSITE-ProRule" id="PRU00535"/>
    </source>
</evidence>
<evidence type="ECO:0000305" key="5"/>
<reference key="1">
    <citation type="journal article" date="2004" name="Proc. Natl. Acad. Sci. U.S.A.">
        <title>The diploid genome sequence of Candida albicans.</title>
        <authorList>
            <person name="Jones T."/>
            <person name="Federspiel N.A."/>
            <person name="Chibana H."/>
            <person name="Dungan J."/>
            <person name="Kalman S."/>
            <person name="Magee B.B."/>
            <person name="Newport G."/>
            <person name="Thorstenson Y.R."/>
            <person name="Agabian N."/>
            <person name="Magee P.T."/>
            <person name="Davis R.W."/>
            <person name="Scherer S."/>
        </authorList>
    </citation>
    <scope>NUCLEOTIDE SEQUENCE [LARGE SCALE GENOMIC DNA]</scope>
    <source>
        <strain>SC5314 / ATCC MYA-2876</strain>
    </source>
</reference>
<reference key="2">
    <citation type="journal article" date="2007" name="Genome Biol.">
        <title>Assembly of the Candida albicans genome into sixteen supercontigs aligned on the eight chromosomes.</title>
        <authorList>
            <person name="van het Hoog M."/>
            <person name="Rast T.J."/>
            <person name="Martchenko M."/>
            <person name="Grindle S."/>
            <person name="Dignard D."/>
            <person name="Hogues H."/>
            <person name="Cuomo C."/>
            <person name="Berriman M."/>
            <person name="Scherer S."/>
            <person name="Magee B.B."/>
            <person name="Whiteway M."/>
            <person name="Chibana H."/>
            <person name="Nantel A."/>
            <person name="Magee P.T."/>
        </authorList>
    </citation>
    <scope>GENOME REANNOTATION</scope>
    <source>
        <strain>SC5314 / ATCC MYA-2876</strain>
    </source>
</reference>
<reference key="3">
    <citation type="journal article" date="2013" name="Genome Biol.">
        <title>Assembly of a phased diploid Candida albicans genome facilitates allele-specific measurements and provides a simple model for repeat and indel structure.</title>
        <authorList>
            <person name="Muzzey D."/>
            <person name="Schwartz K."/>
            <person name="Weissman J.S."/>
            <person name="Sherlock G."/>
        </authorList>
    </citation>
    <scope>NUCLEOTIDE SEQUENCE [LARGE SCALE GENOMIC DNA]</scope>
    <scope>GENOME REANNOTATION</scope>
    <source>
        <strain>SC5314 / ATCC MYA-2876</strain>
    </source>
</reference>
<dbReference type="EC" id="2.7.11.1"/>
<dbReference type="EMBL" id="CP017628">
    <property type="protein sequence ID" value="AOW30232.1"/>
    <property type="molecule type" value="Genomic_DNA"/>
</dbReference>
<dbReference type="RefSeq" id="XP_719142.2">
    <property type="nucleotide sequence ID" value="XM_714049.2"/>
</dbReference>
<dbReference type="SMR" id="Q5ABX0"/>
<dbReference type="BioGRID" id="1222167">
    <property type="interactions" value="1"/>
</dbReference>
<dbReference type="FunCoup" id="Q5ABX0">
    <property type="interactions" value="101"/>
</dbReference>
<dbReference type="STRING" id="237561.Q5ABX0"/>
<dbReference type="EnsemblFungi" id="C6_03010W_A-T">
    <property type="protein sequence ID" value="C6_03010W_A-T-p1"/>
    <property type="gene ID" value="C6_03010W_A"/>
</dbReference>
<dbReference type="GeneID" id="3639263"/>
<dbReference type="KEGG" id="cal:CAALFM_C603010WA"/>
<dbReference type="CGD" id="CAL0000195481">
    <property type="gene designation" value="TEL1"/>
</dbReference>
<dbReference type="VEuPathDB" id="FungiDB:C6_03010W_A"/>
<dbReference type="eggNOG" id="KOG0892">
    <property type="taxonomic scope" value="Eukaryota"/>
</dbReference>
<dbReference type="HOGENOM" id="CLU_000178_8_1_1"/>
<dbReference type="InParanoid" id="Q5ABX0"/>
<dbReference type="OrthoDB" id="381190at2759"/>
<dbReference type="PRO" id="PR:Q5ABX0"/>
<dbReference type="Proteomes" id="UP000000559">
    <property type="component" value="Chromosome 6"/>
</dbReference>
<dbReference type="GO" id="GO:0005694">
    <property type="term" value="C:chromosome"/>
    <property type="evidence" value="ECO:0000318"/>
    <property type="project" value="GO_Central"/>
</dbReference>
<dbReference type="GO" id="GO:0000781">
    <property type="term" value="C:chromosome, telomeric region"/>
    <property type="evidence" value="ECO:0007669"/>
    <property type="project" value="UniProtKB-SubCell"/>
</dbReference>
<dbReference type="GO" id="GO:0005634">
    <property type="term" value="C:nucleus"/>
    <property type="evidence" value="ECO:0000318"/>
    <property type="project" value="GO_Central"/>
</dbReference>
<dbReference type="GO" id="GO:0005524">
    <property type="term" value="F:ATP binding"/>
    <property type="evidence" value="ECO:0007669"/>
    <property type="project" value="UniProtKB-KW"/>
</dbReference>
<dbReference type="GO" id="GO:0106310">
    <property type="term" value="F:protein serine kinase activity"/>
    <property type="evidence" value="ECO:0007669"/>
    <property type="project" value="RHEA"/>
</dbReference>
<dbReference type="GO" id="GO:0004674">
    <property type="term" value="F:protein serine/threonine kinase activity"/>
    <property type="evidence" value="ECO:0000318"/>
    <property type="project" value="GO_Central"/>
</dbReference>
<dbReference type="GO" id="GO:0006325">
    <property type="term" value="P:chromatin organization"/>
    <property type="evidence" value="ECO:0007669"/>
    <property type="project" value="UniProtKB-KW"/>
</dbReference>
<dbReference type="GO" id="GO:0000077">
    <property type="term" value="P:DNA damage checkpoint signaling"/>
    <property type="evidence" value="ECO:0000318"/>
    <property type="project" value="GO_Central"/>
</dbReference>
<dbReference type="GO" id="GO:0006302">
    <property type="term" value="P:double-strand break repair"/>
    <property type="evidence" value="ECO:0000318"/>
    <property type="project" value="GO_Central"/>
</dbReference>
<dbReference type="GO" id="GO:0000723">
    <property type="term" value="P:telomere maintenance"/>
    <property type="evidence" value="ECO:0000318"/>
    <property type="project" value="GO_Central"/>
</dbReference>
<dbReference type="CDD" id="cd05171">
    <property type="entry name" value="PIKKc_ATM"/>
    <property type="match status" value="1"/>
</dbReference>
<dbReference type="FunFam" id="3.30.1010.10:FF:000032">
    <property type="entry name" value="Serine/threonine-protein kinase TEL1"/>
    <property type="match status" value="1"/>
</dbReference>
<dbReference type="Gene3D" id="1.10.1070.11">
    <property type="entry name" value="Phosphatidylinositol 3-/4-kinase, catalytic domain"/>
    <property type="match status" value="1"/>
</dbReference>
<dbReference type="Gene3D" id="3.30.1010.10">
    <property type="entry name" value="Phosphatidylinositol 3-kinase Catalytic Subunit, Chain A, domain 4"/>
    <property type="match status" value="1"/>
</dbReference>
<dbReference type="InterPro" id="IPR038980">
    <property type="entry name" value="ATM_plant"/>
</dbReference>
<dbReference type="InterPro" id="IPR003152">
    <property type="entry name" value="FATC_dom"/>
</dbReference>
<dbReference type="InterPro" id="IPR011009">
    <property type="entry name" value="Kinase-like_dom_sf"/>
</dbReference>
<dbReference type="InterPro" id="IPR000403">
    <property type="entry name" value="PI3/4_kinase_cat_dom"/>
</dbReference>
<dbReference type="InterPro" id="IPR036940">
    <property type="entry name" value="PI3/4_kinase_cat_sf"/>
</dbReference>
<dbReference type="InterPro" id="IPR018936">
    <property type="entry name" value="PI3/4_kinase_CS"/>
</dbReference>
<dbReference type="InterPro" id="IPR014009">
    <property type="entry name" value="PIK_FAT"/>
</dbReference>
<dbReference type="InterPro" id="IPR044107">
    <property type="entry name" value="PIKKc_ATM"/>
</dbReference>
<dbReference type="InterPro" id="IPR021668">
    <property type="entry name" value="TAN"/>
</dbReference>
<dbReference type="PANTHER" id="PTHR37079">
    <property type="entry name" value="SERINE/THREONINE-PROTEIN KINASE ATM"/>
    <property type="match status" value="1"/>
</dbReference>
<dbReference type="PANTHER" id="PTHR37079:SF4">
    <property type="entry name" value="SERINE_THREONINE-PROTEIN KINASE ATM"/>
    <property type="match status" value="1"/>
</dbReference>
<dbReference type="Pfam" id="PF02260">
    <property type="entry name" value="FATC"/>
    <property type="match status" value="1"/>
</dbReference>
<dbReference type="Pfam" id="PF00454">
    <property type="entry name" value="PI3_PI4_kinase"/>
    <property type="match status" value="1"/>
</dbReference>
<dbReference type="Pfam" id="PF11640">
    <property type="entry name" value="TAN"/>
    <property type="match status" value="1"/>
</dbReference>
<dbReference type="SMART" id="SM01343">
    <property type="entry name" value="FATC"/>
    <property type="match status" value="1"/>
</dbReference>
<dbReference type="SMART" id="SM00146">
    <property type="entry name" value="PI3Kc"/>
    <property type="match status" value="1"/>
</dbReference>
<dbReference type="SMART" id="SM01342">
    <property type="entry name" value="TAN"/>
    <property type="match status" value="1"/>
</dbReference>
<dbReference type="SUPFAM" id="SSF56112">
    <property type="entry name" value="Protein kinase-like (PK-like)"/>
    <property type="match status" value="1"/>
</dbReference>
<dbReference type="PROSITE" id="PS51189">
    <property type="entry name" value="FAT"/>
    <property type="match status" value="1"/>
</dbReference>
<dbReference type="PROSITE" id="PS51190">
    <property type="entry name" value="FATC"/>
    <property type="match status" value="1"/>
</dbReference>
<dbReference type="PROSITE" id="PS00916">
    <property type="entry name" value="PI3_4_KINASE_2"/>
    <property type="match status" value="1"/>
</dbReference>
<dbReference type="PROSITE" id="PS50290">
    <property type="entry name" value="PI3_4_KINASE_3"/>
    <property type="match status" value="1"/>
</dbReference>
<feature type="chain" id="PRO_0000227698" description="Serine/threonine-protein kinase TEL1">
    <location>
        <begin position="1"/>
        <end position="2873"/>
    </location>
</feature>
<feature type="domain" description="FAT" evidence="3">
    <location>
        <begin position="1830"/>
        <end position="2425"/>
    </location>
</feature>
<feature type="domain" description="PI3K/PI4K catalytic" evidence="2">
    <location>
        <begin position="2530"/>
        <end position="2839"/>
    </location>
</feature>
<feature type="domain" description="FATC" evidence="3 4">
    <location>
        <begin position="2841"/>
        <end position="2873"/>
    </location>
</feature>
<feature type="region of interest" description="G-loop" evidence="2">
    <location>
        <begin position="2536"/>
        <end position="2542"/>
    </location>
</feature>
<feature type="region of interest" description="Catalytic loop" evidence="2">
    <location>
        <begin position="2706"/>
        <end position="2714"/>
    </location>
</feature>
<feature type="region of interest" description="Activation loop" evidence="2">
    <location>
        <begin position="2726"/>
        <end position="2750"/>
    </location>
</feature>
<accession>Q5ABX0</accession>
<accession>A0A1D8PQ18</accession>
<accession>Q5AC91</accession>
<organism>
    <name type="scientific">Candida albicans (strain SC5314 / ATCC MYA-2876)</name>
    <name type="common">Yeast</name>
    <dbReference type="NCBI Taxonomy" id="237561"/>
    <lineage>
        <taxon>Eukaryota</taxon>
        <taxon>Fungi</taxon>
        <taxon>Dikarya</taxon>
        <taxon>Ascomycota</taxon>
        <taxon>Saccharomycotina</taxon>
        <taxon>Pichiomycetes</taxon>
        <taxon>Debaryomycetaceae</taxon>
        <taxon>Candida/Lodderomyces clade</taxon>
        <taxon>Candida</taxon>
    </lineage>
</organism>
<sequence length="2873" mass="328078">MSTSDINKTIALLQSSKIKERNDALNNLENIAASKFRLNPKQFRQLTQAILALIKHESQIYFNNKSTTVDSRLSQASYNLRLLTEKSIEDTRIDFKYRTYLDLCMGIKDQFFVHSELLEPCSIDFIKTITSILNLSYVKEHLNRKEWSILYIFLVSLINNILDDCEGSFSNNGNNEKLLIDLYTALQNLLQCESSVSINYLQLYDNDNYFKLLRILDKTSELLKKENVIIIIIFRIINKLITVIATEKFKFVNKLIKIGIRLMVYFHHSHWEKLQEQFLIFINLPGTHDLINLHNLPKLIGDRYILSEISTQEDGDSINSQADNQDEVFLYNLGVLIHHLMKKLMSGSFELKTEDIGMCTINNSITWFNLKTIYSDSQNYKPWLLTLGVSRLLKSYYDLKQFINKQSNDPQTSLLLYSNGSPNKNKRQKLGSIADTISDSNSAIELCNKLIHSKESSDNQVLGLKLLTFYLELYTFEKPKEQSTESDSMDTTIGENTTFDFVISTTDNTFIDKNVVMKNILITFDDNSMNFWSSLCARSVLLDEILQSNHGGFKFKKSFSIQLLKLSLLLLKEPEVANIACNIIFKLVFEQKTNLSELIDDSVIIQLETLIDLSEINGPYKITEESFQFWYAINKLAIEVNLSKKNFLGRRIQDWMLAKWDITFSPGADFVSVGSSLANFIYWLSGNSISYSPTTTQKSTYEGDIYEFYYFAQSYDSLEKFLCLKSVSDSSETIKFDIISIASSDRIDAILNKVNSTFMVFDRSSVTSGSLFCWIIVLSNIVAKVRSMKFVTHELTGLQFQLSAGLNSFKDITLSCEEIIDVMEMVNKFLPTDPDTIQIFIQNFPSEKLVNIIKFDYPGLADKDNRKSVPEDGFGWEFSRVRDATTPPSTTSTSTISLAKLNYKKIQSLEVSKFIMFTADIEGKLQSDILTAFLNYVETLESDDFLPSLLFVVENIFTDHSAHFIDEIQLAKLLRIINEKLLSTQNYERNEFVSVVISRFLSATAQVWINSSDNSLASDFYSLVSRLYSSGRDDLILTETSIVEYCRFLAHFITHNDERVLSNTDIKNELLEKFSKSPNNIKDRLANSFGELVSLSTVQQQGQIYSDLFDRFVNPEQSVESAGTYTKFFTNLSQSSLHILRLALFNLLECSRFPFFISYLEICLKEFCMIMKLDNANKLFKIFKFEILRNWWKYDSIDAFPFVLFSYTDLSSFYRDNYRELIAVALSTKSRSPEISNAFVEQLADLKQSHSETLVAESLSIIVPLSYSKDGVRNDVFQILLDYLKNSFKQEFIDKLPLIVLEIIKFTEISNEKSFESLGTDGLVTMLLNDTGFSSTIQTAGEMVISFDSSVQLLKKLVEKYHQPEHETFWSSRQIYFLIRRLSISLKLATTFEQKVIFLRKFKFVLVLGGKKSIDYAVSRLLVDTLCPLLSNEPKMSADVFLILQSLTDVYSHRYTYDKSISLIIQIINSLLETEAVDRSRALLDCIDDFVNTGDQDRAICQLLKSSVAILKGQAVEIESSLIELCLEESGPDYIKQMILISRIFGNVVFATTHSGSKLPVVEKLLALSKNQIQEFSDGYKLWIANYLSDFYIEGGCKEQIKALTFDEYEGIPVNDFENEVRSFDFTLKSIEQYIYKDDFEAAACAESIIGVLIRKYETSKREVSKFLNFETTLEKHSDSILPIDFHTCVILNDKADVEYLGDELIDIINNFESFLSNGTELWCTKLYLALLQELAVETSIAPLLSTFVIMVPEFAKTSLPVLVCNYLAIKRTHSQDRIISLLNEFLHTSKKSESSIKVFLQILILIRVGAKIFKKPVFANVFAKIDKLKFYQLACEVKQFKTALMLFEDVASDTNSDVHLQDHYQTLQHVYESLDDDDLVFGLPERTTLEYSISMINRVGNSDDRLRFSSAGFDTDMILNQEPSYSNIVGSLSAAGLLGVSRALSKNTSFASNDDSQYEWSWKLSKWDLPISKNATKENEVIYKTLKQIHDFPMNSQDICSSSLLNAVDNKVSATNMSVKEFKQEGINWLKTISTVASIAEIANATGDNIIPMTNQFSEKTQWFGEVEFSMFENLLLARQTTFGLINDRPISSLPSDTAWMGALCDLVRYNNLARTNGEYQKMVTSTMLVDVVSKKLQSSSLDMVAFNANNLASFQTAQTLWCQGNTNVPVMIMKDLYAAGGIDMSENILKVDKCLIRAMMVDWMSQSRQEVASSIMEKYVMPTEELSNHMIDLQQQSKIFSILARFCEEQYKFKSLSEKISKLEKRVLNKENEIKDLKKQYEKVTVTHAEQKQVQQYYNRLKKQFVSESKDLESLRKSKQLFSSKAVQYYMKSIIVDDFEEENLDKFFSLWLEQSGNNELNQSIQSNLLALPSYKLVSWCTQLISRLSNETNNFQILLKKLIINMCLDHPHHSLYLLLSLKKHKPNTNEVLNPSLLSRCAAAQAIWDQLLLQDHRYISDVLLPIDGFTDQCITLAAYKVSKGKSIDLTKFSAGDYWLNELPAIPPPTETIRVDPSKQYKNVPVLHSIDKKISIATSGLSLPKIANFILSNGTEHRVLLKHGTDGIRQDSIMEQVFNKVNNIFAKDRECNKRGLTIRTYNAVPLGPLSGIIEFVPNSMAFIDVISGYHQMHDKISYDKAREMMKSCQSGDKQKRIHSFEQIEAKIKPVMRYFFQETFLTSDSWFESRVKYTHGIATSSIVGHILGLGDRHCNNILIDRSTGEPIHIDLGVAFDQGKRLAIPETVPFRLTRDIVDGFGVTGVEGMFKKSCEHTLRVLRTNKEHIISILDVLRWDPLYSWTLSRFKKRKLQEDETGPGVQPEEEGSEAGTAIMTVIEKLNANGLSTEAAVRELIQEATSTQNLALIYFGWSPFY</sequence>
<protein>
    <recommendedName>
        <fullName>Serine/threonine-protein kinase TEL1</fullName>
        <ecNumber>2.7.11.1</ecNumber>
    </recommendedName>
    <alternativeName>
        <fullName>ATM homolog</fullName>
    </alternativeName>
    <alternativeName>
        <fullName>DNA-damage checkpoint kinase TEL1</fullName>
    </alternativeName>
    <alternativeName>
        <fullName>Telomere length regulation protein 1</fullName>
    </alternativeName>
</protein>
<keyword id="KW-0067">ATP-binding</keyword>
<keyword id="KW-0156">Chromatin regulator</keyword>
<keyword id="KW-0158">Chromosome</keyword>
<keyword id="KW-0227">DNA damage</keyword>
<keyword id="KW-0418">Kinase</keyword>
<keyword id="KW-0547">Nucleotide-binding</keyword>
<keyword id="KW-0539">Nucleus</keyword>
<keyword id="KW-1185">Reference proteome</keyword>
<keyword id="KW-0723">Serine/threonine-protein kinase</keyword>
<keyword id="KW-0779">Telomere</keyword>
<keyword id="KW-0808">Transferase</keyword>